<protein>
    <recommendedName>
        <fullName evidence="1">Mannonate dehydratase</fullName>
        <ecNumber evidence="1">4.2.1.8</ecNumber>
    </recommendedName>
    <alternativeName>
        <fullName evidence="1">D-mannonate hydro-lyase</fullName>
    </alternativeName>
</protein>
<gene>
    <name evidence="1" type="primary">uxuA</name>
    <name type="ordered locus">Moth_0430</name>
</gene>
<feature type="chain" id="PRO_1000034334" description="Mannonate dehydratase">
    <location>
        <begin position="1"/>
        <end position="359"/>
    </location>
</feature>
<dbReference type="EC" id="4.2.1.8" evidence="1"/>
<dbReference type="EMBL" id="CP000232">
    <property type="protein sequence ID" value="ABC18761.1"/>
    <property type="molecule type" value="Genomic_DNA"/>
</dbReference>
<dbReference type="RefSeq" id="YP_429304.1">
    <property type="nucleotide sequence ID" value="NC_007644.1"/>
</dbReference>
<dbReference type="SMR" id="Q2RLC8"/>
<dbReference type="STRING" id="264732.Moth_0430"/>
<dbReference type="EnsemblBacteria" id="ABC18761">
    <property type="protein sequence ID" value="ABC18761"/>
    <property type="gene ID" value="Moth_0430"/>
</dbReference>
<dbReference type="KEGG" id="mta:Moth_0430"/>
<dbReference type="PATRIC" id="fig|264732.11.peg.464"/>
<dbReference type="eggNOG" id="COG1312">
    <property type="taxonomic scope" value="Bacteria"/>
</dbReference>
<dbReference type="HOGENOM" id="CLU_058621_1_0_9"/>
<dbReference type="OrthoDB" id="9780250at2"/>
<dbReference type="UniPathway" id="UPA00246"/>
<dbReference type="GO" id="GO:0008198">
    <property type="term" value="F:ferrous iron binding"/>
    <property type="evidence" value="ECO:0007669"/>
    <property type="project" value="TreeGrafter"/>
</dbReference>
<dbReference type="GO" id="GO:0030145">
    <property type="term" value="F:manganese ion binding"/>
    <property type="evidence" value="ECO:0007669"/>
    <property type="project" value="TreeGrafter"/>
</dbReference>
<dbReference type="GO" id="GO:0008927">
    <property type="term" value="F:mannonate dehydratase activity"/>
    <property type="evidence" value="ECO:0007669"/>
    <property type="project" value="UniProtKB-UniRule"/>
</dbReference>
<dbReference type="GO" id="GO:0042840">
    <property type="term" value="P:D-glucuronate catabolic process"/>
    <property type="evidence" value="ECO:0007669"/>
    <property type="project" value="TreeGrafter"/>
</dbReference>
<dbReference type="Gene3D" id="3.20.20.150">
    <property type="entry name" value="Divalent-metal-dependent TIM barrel enzymes"/>
    <property type="match status" value="1"/>
</dbReference>
<dbReference type="HAMAP" id="MF_00106">
    <property type="entry name" value="UxuA"/>
    <property type="match status" value="1"/>
</dbReference>
<dbReference type="InterPro" id="IPR004628">
    <property type="entry name" value="Man_deHydtase"/>
</dbReference>
<dbReference type="InterPro" id="IPR036237">
    <property type="entry name" value="Xyl_isomerase-like_sf"/>
</dbReference>
<dbReference type="NCBIfam" id="NF003027">
    <property type="entry name" value="PRK03906.1"/>
    <property type="match status" value="1"/>
</dbReference>
<dbReference type="NCBIfam" id="TIGR00695">
    <property type="entry name" value="uxuA"/>
    <property type="match status" value="2"/>
</dbReference>
<dbReference type="PANTHER" id="PTHR30387">
    <property type="entry name" value="MANNONATE DEHYDRATASE"/>
    <property type="match status" value="1"/>
</dbReference>
<dbReference type="PANTHER" id="PTHR30387:SF2">
    <property type="entry name" value="MANNONATE DEHYDRATASE"/>
    <property type="match status" value="1"/>
</dbReference>
<dbReference type="Pfam" id="PF03786">
    <property type="entry name" value="UxuA"/>
    <property type="match status" value="1"/>
</dbReference>
<dbReference type="PIRSF" id="PIRSF016049">
    <property type="entry name" value="Man_dehyd"/>
    <property type="match status" value="1"/>
</dbReference>
<dbReference type="SUPFAM" id="SSF51658">
    <property type="entry name" value="Xylose isomerase-like"/>
    <property type="match status" value="1"/>
</dbReference>
<sequence length="359" mass="40902">MKMTFRWFGEGYDSISLDKIRQIPGKPGIVSAIYDVPVGEVWPEEKIKKLKETVENAGLELEVIESVNVHEDIKLGLPSRDRYIENYQQTLRNLAKFGIKVVCYNFMPIFDWTRSDLAKVLPDGSTALSYEEEKVQKVDPNRMVEEVEANSNGFELPGWEPERLKTLKVLFEQYKSVDEEKLLKNLGYFLRAIIPVAEEVDIKMAIHPDDPPWSIFGLPRIVKSKESLEKIMALVDSPYNGITLCSGSLGANPDNDIPALIRYFGAKGRIHFGHVRNIKIHSLRNFDESSHLSSDGSLDMFEIMKAYHDIDFKGYIRPDHGRMIWGEVGRPGYGLYDRALGIAYLNGLWEAIGKMKKVC</sequence>
<proteinExistence type="inferred from homology"/>
<evidence type="ECO:0000255" key="1">
    <source>
        <dbReference type="HAMAP-Rule" id="MF_00106"/>
    </source>
</evidence>
<keyword id="KW-0408">Iron</keyword>
<keyword id="KW-0456">Lyase</keyword>
<keyword id="KW-0464">Manganese</keyword>
<organism>
    <name type="scientific">Moorella thermoacetica (strain ATCC 39073 / JCM 9320)</name>
    <dbReference type="NCBI Taxonomy" id="264732"/>
    <lineage>
        <taxon>Bacteria</taxon>
        <taxon>Bacillati</taxon>
        <taxon>Bacillota</taxon>
        <taxon>Clostridia</taxon>
        <taxon>Moorellales</taxon>
        <taxon>Moorellaceae</taxon>
        <taxon>Moorella</taxon>
    </lineage>
</organism>
<name>UXUA_MOOTA</name>
<reference key="1">
    <citation type="journal article" date="2008" name="Environ. Microbiol.">
        <title>The complete genome sequence of Moorella thermoacetica (f. Clostridium thermoaceticum).</title>
        <authorList>
            <person name="Pierce E."/>
            <person name="Xie G."/>
            <person name="Barabote R.D."/>
            <person name="Saunders E."/>
            <person name="Han C.S."/>
            <person name="Detter J.C."/>
            <person name="Richardson P."/>
            <person name="Brettin T.S."/>
            <person name="Das A."/>
            <person name="Ljungdahl L.G."/>
            <person name="Ragsdale S.W."/>
        </authorList>
    </citation>
    <scope>NUCLEOTIDE SEQUENCE [LARGE SCALE GENOMIC DNA]</scope>
    <source>
        <strain>ATCC 39073 / JCM 9320</strain>
    </source>
</reference>
<accession>Q2RLC8</accession>
<comment type="function">
    <text evidence="1">Catalyzes the dehydration of D-mannonate.</text>
</comment>
<comment type="catalytic activity">
    <reaction evidence="1">
        <text>D-mannonate = 2-dehydro-3-deoxy-D-gluconate + H2O</text>
        <dbReference type="Rhea" id="RHEA:20097"/>
        <dbReference type="ChEBI" id="CHEBI:15377"/>
        <dbReference type="ChEBI" id="CHEBI:17767"/>
        <dbReference type="ChEBI" id="CHEBI:57990"/>
        <dbReference type="EC" id="4.2.1.8"/>
    </reaction>
</comment>
<comment type="cofactor">
    <cofactor evidence="1">
        <name>Fe(2+)</name>
        <dbReference type="ChEBI" id="CHEBI:29033"/>
    </cofactor>
    <cofactor evidence="1">
        <name>Mn(2+)</name>
        <dbReference type="ChEBI" id="CHEBI:29035"/>
    </cofactor>
</comment>
<comment type="pathway">
    <text evidence="1">Carbohydrate metabolism; pentose and glucuronate interconversion.</text>
</comment>
<comment type="similarity">
    <text evidence="1">Belongs to the mannonate dehydratase family.</text>
</comment>